<comment type="subcellular location">
    <subcellularLocation>
        <location evidence="1">Cytoplasm</location>
    </subcellularLocation>
</comment>
<comment type="similarity">
    <text evidence="1">Belongs to the TACO1 family.</text>
</comment>
<accession>O84463</accession>
<proteinExistence type="inferred from homology"/>
<organism>
    <name type="scientific">Chlamydia trachomatis serovar D (strain ATCC VR-885 / DSM 19411 / UW-3/Cx)</name>
    <dbReference type="NCBI Taxonomy" id="272561"/>
    <lineage>
        <taxon>Bacteria</taxon>
        <taxon>Pseudomonadati</taxon>
        <taxon>Chlamydiota</taxon>
        <taxon>Chlamydiia</taxon>
        <taxon>Chlamydiales</taxon>
        <taxon>Chlamydiaceae</taxon>
        <taxon>Chlamydia/Chlamydophila group</taxon>
        <taxon>Chlamydia</taxon>
    </lineage>
</organism>
<reference key="1">
    <citation type="journal article" date="1998" name="Science">
        <title>Genome sequence of an obligate intracellular pathogen of humans: Chlamydia trachomatis.</title>
        <authorList>
            <person name="Stephens R.S."/>
            <person name="Kalman S."/>
            <person name="Lammel C.J."/>
            <person name="Fan J."/>
            <person name="Marathe R."/>
            <person name="Aravind L."/>
            <person name="Mitchell W.P."/>
            <person name="Olinger L."/>
            <person name="Tatusov R.L."/>
            <person name="Zhao Q."/>
            <person name="Koonin E.V."/>
            <person name="Davis R.W."/>
        </authorList>
    </citation>
    <scope>NUCLEOTIDE SEQUENCE [LARGE SCALE GENOMIC DNA]</scope>
    <source>
        <strain>ATCC VR-885 / DSM 19411 / UW-3/Cx</strain>
    </source>
</reference>
<sequence>MAGHSKWANTKHRKERADHKKGKIFSRTIKELISAVKMGGPDPKSNARLRMIIQKAKDQNIPNENIERNLKKASSADQKNYEEVTYELYGFGGVGIIVEAMTDNKNRTASDMRVAVNKRGGALVEPGSVLYNFSRKGACYVPKHSIDEASLLTHMIDCGGEDLDSDDEEFFLVLCEPTDLASVKEALLAKGVTCSEERLIYVPLRLVDCDEETGKSNLALIEWLENINDVDDVYHNMA</sequence>
<keyword id="KW-0963">Cytoplasm</keyword>
<keyword id="KW-0238">DNA-binding</keyword>
<keyword id="KW-1185">Reference proteome</keyword>
<keyword id="KW-0804">Transcription</keyword>
<keyword id="KW-0805">Transcription regulation</keyword>
<name>Y457_CHLTR</name>
<protein>
    <recommendedName>
        <fullName evidence="1">Probable transcriptional regulatory protein CT_457</fullName>
    </recommendedName>
</protein>
<feature type="chain" id="PRO_0000175786" description="Probable transcriptional regulatory protein CT_457">
    <location>
        <begin position="1"/>
        <end position="238"/>
    </location>
</feature>
<feature type="region of interest" description="Disordered" evidence="2">
    <location>
        <begin position="1"/>
        <end position="21"/>
    </location>
</feature>
<feature type="compositionally biased region" description="Basic residues" evidence="2">
    <location>
        <begin position="9"/>
        <end position="21"/>
    </location>
</feature>
<dbReference type="EMBL" id="AE001273">
    <property type="protein sequence ID" value="AAC68057.1"/>
    <property type="molecule type" value="Genomic_DNA"/>
</dbReference>
<dbReference type="PIR" id="D71513">
    <property type="entry name" value="D71513"/>
</dbReference>
<dbReference type="RefSeq" id="NP_219970.1">
    <property type="nucleotide sequence ID" value="NC_000117.1"/>
</dbReference>
<dbReference type="RefSeq" id="WP_009871815.1">
    <property type="nucleotide sequence ID" value="NC_000117.1"/>
</dbReference>
<dbReference type="SMR" id="O84463"/>
<dbReference type="FunCoup" id="O84463">
    <property type="interactions" value="230"/>
</dbReference>
<dbReference type="STRING" id="272561.CT_457"/>
<dbReference type="EnsemblBacteria" id="AAC68057">
    <property type="protein sequence ID" value="AAC68057"/>
    <property type="gene ID" value="CT_457"/>
</dbReference>
<dbReference type="GeneID" id="884236"/>
<dbReference type="KEGG" id="ctr:CT_457"/>
<dbReference type="PATRIC" id="fig|272561.5.peg.494"/>
<dbReference type="HOGENOM" id="CLU_062974_3_0_0"/>
<dbReference type="InParanoid" id="O84463"/>
<dbReference type="OrthoDB" id="9781053at2"/>
<dbReference type="Proteomes" id="UP000000431">
    <property type="component" value="Chromosome"/>
</dbReference>
<dbReference type="GO" id="GO:0005829">
    <property type="term" value="C:cytosol"/>
    <property type="evidence" value="ECO:0000318"/>
    <property type="project" value="GO_Central"/>
</dbReference>
<dbReference type="GO" id="GO:0003677">
    <property type="term" value="F:DNA binding"/>
    <property type="evidence" value="ECO:0007669"/>
    <property type="project" value="UniProtKB-UniRule"/>
</dbReference>
<dbReference type="GO" id="GO:0006355">
    <property type="term" value="P:regulation of DNA-templated transcription"/>
    <property type="evidence" value="ECO:0007669"/>
    <property type="project" value="UniProtKB-UniRule"/>
</dbReference>
<dbReference type="FunFam" id="1.10.10.200:FF:000002">
    <property type="entry name" value="Probable transcriptional regulatory protein CLM62_37755"/>
    <property type="match status" value="1"/>
</dbReference>
<dbReference type="Gene3D" id="1.10.10.200">
    <property type="match status" value="1"/>
</dbReference>
<dbReference type="Gene3D" id="3.30.70.980">
    <property type="match status" value="2"/>
</dbReference>
<dbReference type="HAMAP" id="MF_00693">
    <property type="entry name" value="Transcrip_reg_TACO1"/>
    <property type="match status" value="1"/>
</dbReference>
<dbReference type="InterPro" id="IPR017856">
    <property type="entry name" value="Integrase-like_N"/>
</dbReference>
<dbReference type="InterPro" id="IPR048300">
    <property type="entry name" value="TACO1_YebC-like_2nd/3rd_dom"/>
</dbReference>
<dbReference type="InterPro" id="IPR049083">
    <property type="entry name" value="TACO1_YebC_N"/>
</dbReference>
<dbReference type="InterPro" id="IPR002876">
    <property type="entry name" value="Transcrip_reg_TACO1-like"/>
</dbReference>
<dbReference type="InterPro" id="IPR026564">
    <property type="entry name" value="Transcrip_reg_TACO1-like_dom3"/>
</dbReference>
<dbReference type="InterPro" id="IPR029072">
    <property type="entry name" value="YebC-like"/>
</dbReference>
<dbReference type="NCBIfam" id="NF001030">
    <property type="entry name" value="PRK00110.1"/>
    <property type="match status" value="1"/>
</dbReference>
<dbReference type="NCBIfam" id="NF009044">
    <property type="entry name" value="PRK12378.1"/>
    <property type="match status" value="1"/>
</dbReference>
<dbReference type="NCBIfam" id="TIGR01033">
    <property type="entry name" value="YebC/PmpR family DNA-binding transcriptional regulator"/>
    <property type="match status" value="1"/>
</dbReference>
<dbReference type="PANTHER" id="PTHR12532:SF6">
    <property type="entry name" value="TRANSCRIPTIONAL REGULATORY PROTEIN YEBC-RELATED"/>
    <property type="match status" value="1"/>
</dbReference>
<dbReference type="PANTHER" id="PTHR12532">
    <property type="entry name" value="TRANSLATIONAL ACTIVATOR OF CYTOCHROME C OXIDASE 1"/>
    <property type="match status" value="1"/>
</dbReference>
<dbReference type="Pfam" id="PF20772">
    <property type="entry name" value="TACO1_YebC_N"/>
    <property type="match status" value="1"/>
</dbReference>
<dbReference type="Pfam" id="PF01709">
    <property type="entry name" value="Transcrip_reg"/>
    <property type="match status" value="1"/>
</dbReference>
<dbReference type="SUPFAM" id="SSF75625">
    <property type="entry name" value="YebC-like"/>
    <property type="match status" value="1"/>
</dbReference>
<gene>
    <name type="ordered locus">CT_457</name>
</gene>
<evidence type="ECO:0000255" key="1">
    <source>
        <dbReference type="HAMAP-Rule" id="MF_00693"/>
    </source>
</evidence>
<evidence type="ECO:0000256" key="2">
    <source>
        <dbReference type="SAM" id="MobiDB-lite"/>
    </source>
</evidence>